<feature type="chain" id="PRO_0000345354" description="tRNA uridine 5-carboxymethylaminomethyl modification enzyme MnmG">
    <location>
        <begin position="1"/>
        <end position="626"/>
    </location>
</feature>
<feature type="binding site" evidence="1">
    <location>
        <begin position="15"/>
        <end position="20"/>
    </location>
    <ligand>
        <name>FAD</name>
        <dbReference type="ChEBI" id="CHEBI:57692"/>
    </ligand>
</feature>
<feature type="binding site" evidence="1">
    <location>
        <begin position="277"/>
        <end position="291"/>
    </location>
    <ligand>
        <name>NAD(+)</name>
        <dbReference type="ChEBI" id="CHEBI:57540"/>
    </ligand>
</feature>
<protein>
    <recommendedName>
        <fullName evidence="1">tRNA uridine 5-carboxymethylaminomethyl modification enzyme MnmG</fullName>
    </recommendedName>
    <alternativeName>
        <fullName evidence="1">Glucose-inhibited division protein A</fullName>
    </alternativeName>
</protein>
<evidence type="ECO:0000255" key="1">
    <source>
        <dbReference type="HAMAP-Rule" id="MF_00129"/>
    </source>
</evidence>
<gene>
    <name evidence="1" type="primary">mnmG</name>
    <name evidence="1" type="synonym">gidA</name>
    <name type="ordered locus">TRQ2_0685</name>
</gene>
<proteinExistence type="inferred from homology"/>
<comment type="function">
    <text evidence="1">NAD-binding protein involved in the addition of a carboxymethylaminomethyl (cmnm) group at the wobble position (U34) of certain tRNAs, forming tRNA-cmnm(5)s(2)U34.</text>
</comment>
<comment type="cofactor">
    <cofactor evidence="1">
        <name>FAD</name>
        <dbReference type="ChEBI" id="CHEBI:57692"/>
    </cofactor>
</comment>
<comment type="subunit">
    <text evidence="1">Homodimer. Heterotetramer of two MnmE and two MnmG subunits.</text>
</comment>
<comment type="subcellular location">
    <subcellularLocation>
        <location evidence="1">Cytoplasm</location>
    </subcellularLocation>
</comment>
<comment type="similarity">
    <text evidence="1">Belongs to the MnmG family.</text>
</comment>
<reference key="1">
    <citation type="journal article" date="2011" name="J. Bacteriol.">
        <title>Genome sequence of Thermotoga sp. strain RQ2, a hyperthermophilic bacterium isolated from a geothermally heated region of the seafloor near Ribeira Quente, the Azores.</title>
        <authorList>
            <person name="Swithers K.S."/>
            <person name="DiPippo J.L."/>
            <person name="Bruce D.C."/>
            <person name="Detter C."/>
            <person name="Tapia R."/>
            <person name="Han S."/>
            <person name="Saunders E."/>
            <person name="Goodwin L.A."/>
            <person name="Han J."/>
            <person name="Woyke T."/>
            <person name="Pitluck S."/>
            <person name="Pennacchio L."/>
            <person name="Nolan M."/>
            <person name="Mikhailova N."/>
            <person name="Lykidis A."/>
            <person name="Land M.L."/>
            <person name="Brettin T."/>
            <person name="Stetter K.O."/>
            <person name="Nelson K.E."/>
            <person name="Gogarten J.P."/>
            <person name="Noll K.M."/>
        </authorList>
    </citation>
    <scope>NUCLEOTIDE SEQUENCE [LARGE SCALE GENOMIC DNA]</scope>
    <source>
        <strain>RQ2</strain>
    </source>
</reference>
<keyword id="KW-0963">Cytoplasm</keyword>
<keyword id="KW-0274">FAD</keyword>
<keyword id="KW-0285">Flavoprotein</keyword>
<keyword id="KW-0520">NAD</keyword>
<keyword id="KW-0819">tRNA processing</keyword>
<sequence length="626" mass="70613">MRPEDDRVYDVIVVGAGHAGIEAALAAARMGFRVLVLTVNPDTVGWAPCNPAIGGPAKGVVVREIDALGGEMAKTTDETMINVRMLNVSKGPAVRALRAQIDKISYSRTMKRKLETNPNIVLRHGIVERILTEKGRVKGVVDNYGIDYLGKAVIVTTGTFLRGKIFIGRSTFPAGRMGEFPATKLTESLIELGFEVGRFKTGTPARVLKRSINFSVMERQDTSDEPLAFSFFDEPRVLPKDYPCWLTRTNPETHSIIKQYLEFSPLYGTVKLIEGIGPRYCPSIEDKVVKFKDKESHQVFVEPEGRDTEEYYLNGLSTSLPYEAQIKMIRSVKGLENAIVTRPAYAIEYDYIDPRQLYPTLESKLVENLYFAGQVNGTSGYEEAAGQGIIAGINAALKLRGEPPLILKRSEAYIGVLIDDLVTKGVDEPYRLLTSRAEYRLLLRHDNAHLRLAKYGYRVGLIPKWFYEKVLSLERRINEEIERLKKVIVKPSDRVNDLLTSLGTSPLKESVSLYQLLKRPQLSYSALKFLDPNPIDDPEVVEQVEINVKYEGYIQKMFEEVAVFEKYENYEIPHDLDYDAVPNLSTEARDKLKKIRPRSIGQAMRIPGINPSDISNLIIYLDRKKQ</sequence>
<organism>
    <name type="scientific">Thermotoga sp. (strain RQ2)</name>
    <dbReference type="NCBI Taxonomy" id="126740"/>
    <lineage>
        <taxon>Bacteria</taxon>
        <taxon>Thermotogati</taxon>
        <taxon>Thermotogota</taxon>
        <taxon>Thermotogae</taxon>
        <taxon>Thermotogales</taxon>
        <taxon>Thermotogaceae</taxon>
        <taxon>Thermotoga</taxon>
    </lineage>
</organism>
<accession>B1L9P0</accession>
<dbReference type="EMBL" id="CP000969">
    <property type="protein sequence ID" value="ACB09038.1"/>
    <property type="molecule type" value="Genomic_DNA"/>
</dbReference>
<dbReference type="RefSeq" id="WP_012310685.1">
    <property type="nucleotide sequence ID" value="NC_010483.1"/>
</dbReference>
<dbReference type="SMR" id="B1L9P0"/>
<dbReference type="KEGG" id="trq:TRQ2_0685"/>
<dbReference type="HOGENOM" id="CLU_007831_2_2_0"/>
<dbReference type="Proteomes" id="UP000001687">
    <property type="component" value="Chromosome"/>
</dbReference>
<dbReference type="GO" id="GO:0005829">
    <property type="term" value="C:cytosol"/>
    <property type="evidence" value="ECO:0007669"/>
    <property type="project" value="TreeGrafter"/>
</dbReference>
<dbReference type="GO" id="GO:0050660">
    <property type="term" value="F:flavin adenine dinucleotide binding"/>
    <property type="evidence" value="ECO:0007669"/>
    <property type="project" value="UniProtKB-UniRule"/>
</dbReference>
<dbReference type="GO" id="GO:0030488">
    <property type="term" value="P:tRNA methylation"/>
    <property type="evidence" value="ECO:0007669"/>
    <property type="project" value="TreeGrafter"/>
</dbReference>
<dbReference type="GO" id="GO:0002098">
    <property type="term" value="P:tRNA wobble uridine modification"/>
    <property type="evidence" value="ECO:0007669"/>
    <property type="project" value="InterPro"/>
</dbReference>
<dbReference type="FunFam" id="1.10.10.1800:FF:000001">
    <property type="entry name" value="tRNA uridine 5-carboxymethylaminomethyl modification enzyme MnmG"/>
    <property type="match status" value="1"/>
</dbReference>
<dbReference type="FunFam" id="1.10.150.570:FF:000001">
    <property type="entry name" value="tRNA uridine 5-carboxymethylaminomethyl modification enzyme MnmG"/>
    <property type="match status" value="1"/>
</dbReference>
<dbReference type="FunFam" id="3.50.50.60:FF:000002">
    <property type="entry name" value="tRNA uridine 5-carboxymethylaminomethyl modification enzyme MnmG"/>
    <property type="match status" value="1"/>
</dbReference>
<dbReference type="FunFam" id="3.50.50.60:FF:000119">
    <property type="entry name" value="tRNA uridine 5-carboxymethylaminomethyl modification enzyme MnmG"/>
    <property type="match status" value="1"/>
</dbReference>
<dbReference type="Gene3D" id="3.50.50.60">
    <property type="entry name" value="FAD/NAD(P)-binding domain"/>
    <property type="match status" value="2"/>
</dbReference>
<dbReference type="Gene3D" id="1.10.150.570">
    <property type="entry name" value="GidA associated domain, C-terminal subdomain"/>
    <property type="match status" value="1"/>
</dbReference>
<dbReference type="Gene3D" id="1.10.10.1800">
    <property type="entry name" value="tRNA uridine 5-carboxymethylaminomethyl modification enzyme MnmG/GidA"/>
    <property type="match status" value="1"/>
</dbReference>
<dbReference type="HAMAP" id="MF_00129">
    <property type="entry name" value="MnmG_GidA"/>
    <property type="match status" value="1"/>
</dbReference>
<dbReference type="InterPro" id="IPR036188">
    <property type="entry name" value="FAD/NAD-bd_sf"/>
</dbReference>
<dbReference type="InterPro" id="IPR049312">
    <property type="entry name" value="GIDA_C_N"/>
</dbReference>
<dbReference type="InterPro" id="IPR004416">
    <property type="entry name" value="MnmG"/>
</dbReference>
<dbReference type="InterPro" id="IPR002218">
    <property type="entry name" value="MnmG-rel"/>
</dbReference>
<dbReference type="InterPro" id="IPR020595">
    <property type="entry name" value="MnmG-rel_CS"/>
</dbReference>
<dbReference type="InterPro" id="IPR026904">
    <property type="entry name" value="MnmG_C"/>
</dbReference>
<dbReference type="InterPro" id="IPR047001">
    <property type="entry name" value="MnmG_C_subdom"/>
</dbReference>
<dbReference type="InterPro" id="IPR044920">
    <property type="entry name" value="MnmG_C_subdom_sf"/>
</dbReference>
<dbReference type="InterPro" id="IPR040131">
    <property type="entry name" value="MnmG_N"/>
</dbReference>
<dbReference type="NCBIfam" id="TIGR00136">
    <property type="entry name" value="mnmG_gidA"/>
    <property type="match status" value="1"/>
</dbReference>
<dbReference type="PANTHER" id="PTHR11806">
    <property type="entry name" value="GLUCOSE INHIBITED DIVISION PROTEIN A"/>
    <property type="match status" value="1"/>
</dbReference>
<dbReference type="PANTHER" id="PTHR11806:SF0">
    <property type="entry name" value="PROTEIN MTO1 HOMOLOG, MITOCHONDRIAL"/>
    <property type="match status" value="1"/>
</dbReference>
<dbReference type="Pfam" id="PF01134">
    <property type="entry name" value="GIDA"/>
    <property type="match status" value="1"/>
</dbReference>
<dbReference type="Pfam" id="PF21680">
    <property type="entry name" value="GIDA_C_1st"/>
    <property type="match status" value="1"/>
</dbReference>
<dbReference type="Pfam" id="PF13932">
    <property type="entry name" value="SAM_GIDA_C"/>
    <property type="match status" value="1"/>
</dbReference>
<dbReference type="PRINTS" id="PR00411">
    <property type="entry name" value="PNDRDTASEI"/>
</dbReference>
<dbReference type="SMART" id="SM01228">
    <property type="entry name" value="GIDA_assoc_3"/>
    <property type="match status" value="1"/>
</dbReference>
<dbReference type="SUPFAM" id="SSF51905">
    <property type="entry name" value="FAD/NAD(P)-binding domain"/>
    <property type="match status" value="1"/>
</dbReference>
<dbReference type="PROSITE" id="PS01280">
    <property type="entry name" value="GIDA_1"/>
    <property type="match status" value="1"/>
</dbReference>
<dbReference type="PROSITE" id="PS01281">
    <property type="entry name" value="GIDA_2"/>
    <property type="match status" value="1"/>
</dbReference>
<name>MNMG_THESQ</name>